<organism>
    <name type="scientific">Shigella boydii serotype 4 (strain Sb227)</name>
    <dbReference type="NCBI Taxonomy" id="300268"/>
    <lineage>
        <taxon>Bacteria</taxon>
        <taxon>Pseudomonadati</taxon>
        <taxon>Pseudomonadota</taxon>
        <taxon>Gammaproteobacteria</taxon>
        <taxon>Enterobacterales</taxon>
        <taxon>Enterobacteriaceae</taxon>
        <taxon>Shigella</taxon>
    </lineage>
</organism>
<protein>
    <recommendedName>
        <fullName evidence="1">NAD-capped RNA hydrolase NudC</fullName>
        <shortName evidence="1">DeNADding enzyme NudC</shortName>
        <ecNumber evidence="1">3.6.1.-</ecNumber>
    </recommendedName>
    <alternativeName>
        <fullName evidence="1">NADH pyrophosphatase</fullName>
        <ecNumber evidence="1">3.6.1.22</ecNumber>
    </alternativeName>
</protein>
<feature type="chain" id="PRO_0000232122" description="NAD-capped RNA hydrolase NudC">
    <location>
        <begin position="1"/>
        <end position="257"/>
    </location>
</feature>
<feature type="domain" description="Nudix hydrolase" evidence="1">
    <location>
        <begin position="125"/>
        <end position="248"/>
    </location>
</feature>
<feature type="short sequence motif" description="Nudix box" evidence="1">
    <location>
        <begin position="159"/>
        <end position="180"/>
    </location>
</feature>
<feature type="binding site" evidence="1">
    <location>
        <position position="25"/>
    </location>
    <ligand>
        <name>substrate</name>
    </ligand>
</feature>
<feature type="binding site" evidence="1">
    <location>
        <position position="69"/>
    </location>
    <ligand>
        <name>substrate</name>
    </ligand>
</feature>
<feature type="binding site" evidence="1">
    <location>
        <position position="98"/>
    </location>
    <ligand>
        <name>Zn(2+)</name>
        <dbReference type="ChEBI" id="CHEBI:29105"/>
    </ligand>
</feature>
<feature type="binding site" evidence="1">
    <location>
        <position position="101"/>
    </location>
    <ligand>
        <name>Zn(2+)</name>
        <dbReference type="ChEBI" id="CHEBI:29105"/>
    </ligand>
</feature>
<feature type="binding site" evidence="1">
    <location>
        <position position="111"/>
    </location>
    <ligand>
        <name>substrate</name>
    </ligand>
</feature>
<feature type="binding site" evidence="1">
    <location>
        <position position="116"/>
    </location>
    <ligand>
        <name>Zn(2+)</name>
        <dbReference type="ChEBI" id="CHEBI:29105"/>
    </ligand>
</feature>
<feature type="binding site" evidence="1">
    <location>
        <position position="119"/>
    </location>
    <ligand>
        <name>Zn(2+)</name>
        <dbReference type="ChEBI" id="CHEBI:29105"/>
    </ligand>
</feature>
<feature type="binding site" evidence="1">
    <location>
        <position position="124"/>
    </location>
    <ligand>
        <name>substrate</name>
    </ligand>
</feature>
<feature type="binding site" evidence="1">
    <location>
        <position position="158"/>
    </location>
    <ligand>
        <name>a divalent metal cation</name>
        <dbReference type="ChEBI" id="CHEBI:60240"/>
        <label>1</label>
    </ligand>
</feature>
<feature type="binding site" evidence="1">
    <location>
        <position position="174"/>
    </location>
    <ligand>
        <name>a divalent metal cation</name>
        <dbReference type="ChEBI" id="CHEBI:60240"/>
        <label>2</label>
    </ligand>
</feature>
<feature type="binding site" evidence="1">
    <location>
        <position position="174"/>
    </location>
    <ligand>
        <name>a divalent metal cation</name>
        <dbReference type="ChEBI" id="CHEBI:60240"/>
        <label>3</label>
    </ligand>
</feature>
<feature type="binding site" evidence="1">
    <location>
        <position position="178"/>
    </location>
    <ligand>
        <name>a divalent metal cation</name>
        <dbReference type="ChEBI" id="CHEBI:60240"/>
        <label>1</label>
    </ligand>
</feature>
<feature type="binding site" evidence="1">
    <location>
        <position position="178"/>
    </location>
    <ligand>
        <name>a divalent metal cation</name>
        <dbReference type="ChEBI" id="CHEBI:60240"/>
        <label>3</label>
    </ligand>
</feature>
<feature type="binding site" evidence="1">
    <location>
        <begin position="192"/>
        <end position="199"/>
    </location>
    <ligand>
        <name>substrate</name>
    </ligand>
</feature>
<feature type="binding site" evidence="1">
    <location>
        <position position="219"/>
    </location>
    <ligand>
        <name>a divalent metal cation</name>
        <dbReference type="ChEBI" id="CHEBI:60240"/>
        <label>1</label>
    </ligand>
</feature>
<feature type="binding site" evidence="1">
    <location>
        <position position="219"/>
    </location>
    <ligand>
        <name>a divalent metal cation</name>
        <dbReference type="ChEBI" id="CHEBI:60240"/>
        <label>3</label>
    </ligand>
</feature>
<feature type="binding site" evidence="1">
    <location>
        <position position="241"/>
    </location>
    <ligand>
        <name>substrate</name>
    </ligand>
</feature>
<evidence type="ECO:0000255" key="1">
    <source>
        <dbReference type="HAMAP-Rule" id="MF_00297"/>
    </source>
</evidence>
<proteinExistence type="inferred from homology"/>
<accession>Q31U01</accession>
<gene>
    <name evidence="1" type="primary">nudC</name>
    <name type="ordered locus">SBO_4017</name>
</gene>
<name>NUDC_SHIBS</name>
<comment type="function">
    <text evidence="1">mRNA decapping enzyme that specifically removes the nicotinamide adenine dinucleotide (NAD) cap from a subset of mRNAs by hydrolyzing the diphosphate linkage to produce nicotinamide mononucleotide (NMN) and 5' monophosphate mRNA. The NAD-cap is present at the 5'-end of some mRNAs and stabilizes RNA against 5'-processing. Has preference for mRNAs with a 5'-end purine. Catalyzes the hydrolysis of a broad range of dinucleotide pyrophosphates.</text>
</comment>
<comment type="catalytic activity">
    <reaction evidence="1">
        <text>a 5'-end NAD(+)-phospho-ribonucleoside in mRNA + H2O = a 5'-end phospho-adenosine-phospho-ribonucleoside in mRNA + beta-nicotinamide D-ribonucleotide + 2 H(+)</text>
        <dbReference type="Rhea" id="RHEA:60876"/>
        <dbReference type="Rhea" id="RHEA-COMP:15698"/>
        <dbReference type="Rhea" id="RHEA-COMP:15719"/>
        <dbReference type="ChEBI" id="CHEBI:14649"/>
        <dbReference type="ChEBI" id="CHEBI:15377"/>
        <dbReference type="ChEBI" id="CHEBI:15378"/>
        <dbReference type="ChEBI" id="CHEBI:144029"/>
        <dbReference type="ChEBI" id="CHEBI:144051"/>
    </reaction>
    <physiologicalReaction direction="left-to-right" evidence="1">
        <dbReference type="Rhea" id="RHEA:60877"/>
    </physiologicalReaction>
</comment>
<comment type="catalytic activity">
    <reaction evidence="1">
        <text>NAD(+) + H2O = beta-nicotinamide D-ribonucleotide + AMP + 2 H(+)</text>
        <dbReference type="Rhea" id="RHEA:11800"/>
        <dbReference type="ChEBI" id="CHEBI:14649"/>
        <dbReference type="ChEBI" id="CHEBI:15377"/>
        <dbReference type="ChEBI" id="CHEBI:15378"/>
        <dbReference type="ChEBI" id="CHEBI:57540"/>
        <dbReference type="ChEBI" id="CHEBI:456215"/>
        <dbReference type="EC" id="3.6.1.22"/>
    </reaction>
</comment>
<comment type="catalytic activity">
    <reaction evidence="1">
        <text>NADH + H2O = reduced beta-nicotinamide D-ribonucleotide + AMP + 2 H(+)</text>
        <dbReference type="Rhea" id="RHEA:48868"/>
        <dbReference type="ChEBI" id="CHEBI:15377"/>
        <dbReference type="ChEBI" id="CHEBI:15378"/>
        <dbReference type="ChEBI" id="CHEBI:57945"/>
        <dbReference type="ChEBI" id="CHEBI:90832"/>
        <dbReference type="ChEBI" id="CHEBI:456215"/>
        <dbReference type="EC" id="3.6.1.22"/>
    </reaction>
</comment>
<comment type="cofactor">
    <cofactor evidence="1">
        <name>Mg(2+)</name>
        <dbReference type="ChEBI" id="CHEBI:18420"/>
    </cofactor>
    <cofactor evidence="1">
        <name>Mn(2+)</name>
        <dbReference type="ChEBI" id="CHEBI:29035"/>
    </cofactor>
    <text evidence="1">Divalent metal cations. Mg(2+) or Mn(2+).</text>
</comment>
<comment type="cofactor">
    <cofactor evidence="1">
        <name>Zn(2+)</name>
        <dbReference type="ChEBI" id="CHEBI:29105"/>
    </cofactor>
    <text evidence="1">Binds 1 zinc ion per subunit.</text>
</comment>
<comment type="subunit">
    <text evidence="1">Homodimer.</text>
</comment>
<comment type="similarity">
    <text evidence="1">Belongs to the Nudix hydrolase family. NudC subfamily.</text>
</comment>
<reference key="1">
    <citation type="journal article" date="2005" name="Nucleic Acids Res.">
        <title>Genome dynamics and diversity of Shigella species, the etiologic agents of bacillary dysentery.</title>
        <authorList>
            <person name="Yang F."/>
            <person name="Yang J."/>
            <person name="Zhang X."/>
            <person name="Chen L."/>
            <person name="Jiang Y."/>
            <person name="Yan Y."/>
            <person name="Tang X."/>
            <person name="Wang J."/>
            <person name="Xiong Z."/>
            <person name="Dong J."/>
            <person name="Xue Y."/>
            <person name="Zhu Y."/>
            <person name="Xu X."/>
            <person name="Sun L."/>
            <person name="Chen S."/>
            <person name="Nie H."/>
            <person name="Peng J."/>
            <person name="Xu J."/>
            <person name="Wang Y."/>
            <person name="Yuan Z."/>
            <person name="Wen Y."/>
            <person name="Yao Z."/>
            <person name="Shen Y."/>
            <person name="Qiang B."/>
            <person name="Hou Y."/>
            <person name="Yu J."/>
            <person name="Jin Q."/>
        </authorList>
    </citation>
    <scope>NUCLEOTIDE SEQUENCE [LARGE SCALE GENOMIC DNA]</scope>
    <source>
        <strain>Sb227</strain>
    </source>
</reference>
<sequence>MDRIIEKLDHGWWVVSHEQKLWLPKGELPYGEAANFDLVGQRALQIGEWQGEPVWLVQQQRRHDMGSVRQVIDLDVVLFQLAGRGVQLAEFYRSHKYCGYCGHEMYPSKTEWAMLCSHCRERYYPQIAPCIIVAIRRDDSILLAQHTRHRNGVHTVLAGFVEVGETLEQAVAREVMEESGIKVKNLRYVTSQPWPFPQSLMTAFMAEYDSGDIVIDPKELLEANWYRYDDLPLLPPPGTVARRLIEDTVAMCRAEYE</sequence>
<keyword id="KW-0378">Hydrolase</keyword>
<keyword id="KW-0460">Magnesium</keyword>
<keyword id="KW-0464">Manganese</keyword>
<keyword id="KW-0479">Metal-binding</keyword>
<keyword id="KW-0520">NAD</keyword>
<keyword id="KW-0862">Zinc</keyword>
<dbReference type="EC" id="3.6.1.-" evidence="1"/>
<dbReference type="EC" id="3.6.1.22" evidence="1"/>
<dbReference type="EMBL" id="CP000036">
    <property type="protein sequence ID" value="ABB68457.1"/>
    <property type="molecule type" value="Genomic_DNA"/>
</dbReference>
<dbReference type="RefSeq" id="WP_000373946.1">
    <property type="nucleotide sequence ID" value="NC_007613.1"/>
</dbReference>
<dbReference type="SMR" id="Q31U01"/>
<dbReference type="KEGG" id="sbo:SBO_4017"/>
<dbReference type="HOGENOM" id="CLU_037162_0_1_6"/>
<dbReference type="Proteomes" id="UP000007067">
    <property type="component" value="Chromosome"/>
</dbReference>
<dbReference type="GO" id="GO:0005829">
    <property type="term" value="C:cytosol"/>
    <property type="evidence" value="ECO:0007669"/>
    <property type="project" value="TreeGrafter"/>
</dbReference>
<dbReference type="GO" id="GO:0000287">
    <property type="term" value="F:magnesium ion binding"/>
    <property type="evidence" value="ECO:0007669"/>
    <property type="project" value="UniProtKB-UniRule"/>
</dbReference>
<dbReference type="GO" id="GO:0030145">
    <property type="term" value="F:manganese ion binding"/>
    <property type="evidence" value="ECO:0007669"/>
    <property type="project" value="UniProtKB-UniRule"/>
</dbReference>
<dbReference type="GO" id="GO:0000210">
    <property type="term" value="F:NAD+ diphosphatase activity"/>
    <property type="evidence" value="ECO:0007669"/>
    <property type="project" value="UniProtKB-UniRule"/>
</dbReference>
<dbReference type="GO" id="GO:0035529">
    <property type="term" value="F:NADH pyrophosphatase activity"/>
    <property type="evidence" value="ECO:0007669"/>
    <property type="project" value="TreeGrafter"/>
</dbReference>
<dbReference type="GO" id="GO:0110153">
    <property type="term" value="F:RNA NAD-cap (NMN-forming) hydrolase activity"/>
    <property type="evidence" value="ECO:0007669"/>
    <property type="project" value="RHEA"/>
</dbReference>
<dbReference type="GO" id="GO:0008270">
    <property type="term" value="F:zinc ion binding"/>
    <property type="evidence" value="ECO:0007669"/>
    <property type="project" value="UniProtKB-UniRule"/>
</dbReference>
<dbReference type="GO" id="GO:0019677">
    <property type="term" value="P:NAD catabolic process"/>
    <property type="evidence" value="ECO:0007669"/>
    <property type="project" value="TreeGrafter"/>
</dbReference>
<dbReference type="GO" id="GO:0006734">
    <property type="term" value="P:NADH metabolic process"/>
    <property type="evidence" value="ECO:0007669"/>
    <property type="project" value="TreeGrafter"/>
</dbReference>
<dbReference type="GO" id="GO:0006742">
    <property type="term" value="P:NADP catabolic process"/>
    <property type="evidence" value="ECO:0007669"/>
    <property type="project" value="TreeGrafter"/>
</dbReference>
<dbReference type="CDD" id="cd03429">
    <property type="entry name" value="NUDIX_NADH_pyrophosphatase_Nudt13"/>
    <property type="match status" value="1"/>
</dbReference>
<dbReference type="FunFam" id="3.90.79.10:FF:000004">
    <property type="entry name" value="NADH pyrophosphatase"/>
    <property type="match status" value="1"/>
</dbReference>
<dbReference type="FunFam" id="3.90.79.20:FF:000001">
    <property type="entry name" value="NADH pyrophosphatase"/>
    <property type="match status" value="1"/>
</dbReference>
<dbReference type="Gene3D" id="3.90.79.20">
    <property type="match status" value="1"/>
</dbReference>
<dbReference type="Gene3D" id="3.90.79.10">
    <property type="entry name" value="Nucleoside Triphosphate Pyrophosphohydrolase"/>
    <property type="match status" value="1"/>
</dbReference>
<dbReference type="HAMAP" id="MF_00297">
    <property type="entry name" value="Nudix_NudC"/>
    <property type="match status" value="1"/>
</dbReference>
<dbReference type="InterPro" id="IPR050241">
    <property type="entry name" value="NAD-cap_RNA_hydrolase_NudC"/>
</dbReference>
<dbReference type="InterPro" id="IPR049734">
    <property type="entry name" value="NudC-like_C"/>
</dbReference>
<dbReference type="InterPro" id="IPR015797">
    <property type="entry name" value="NUDIX_hydrolase-like_dom_sf"/>
</dbReference>
<dbReference type="InterPro" id="IPR020084">
    <property type="entry name" value="NUDIX_hydrolase_CS"/>
</dbReference>
<dbReference type="InterPro" id="IPR000086">
    <property type="entry name" value="NUDIX_hydrolase_dom"/>
</dbReference>
<dbReference type="InterPro" id="IPR022925">
    <property type="entry name" value="RNA_Hydrolase_NudC"/>
</dbReference>
<dbReference type="InterPro" id="IPR015376">
    <property type="entry name" value="Znr_NADH_PPase"/>
</dbReference>
<dbReference type="NCBIfam" id="NF001299">
    <property type="entry name" value="PRK00241.1"/>
    <property type="match status" value="1"/>
</dbReference>
<dbReference type="PANTHER" id="PTHR42904:SF6">
    <property type="entry name" value="NAD-CAPPED RNA HYDROLASE NUDT12"/>
    <property type="match status" value="1"/>
</dbReference>
<dbReference type="PANTHER" id="PTHR42904">
    <property type="entry name" value="NUDIX HYDROLASE, NUDC SUBFAMILY"/>
    <property type="match status" value="1"/>
</dbReference>
<dbReference type="Pfam" id="PF00293">
    <property type="entry name" value="NUDIX"/>
    <property type="match status" value="1"/>
</dbReference>
<dbReference type="Pfam" id="PF09297">
    <property type="entry name" value="Zn_ribbon_NUD"/>
    <property type="match status" value="1"/>
</dbReference>
<dbReference type="SUPFAM" id="SSF55811">
    <property type="entry name" value="Nudix"/>
    <property type="match status" value="2"/>
</dbReference>
<dbReference type="PROSITE" id="PS51462">
    <property type="entry name" value="NUDIX"/>
    <property type="match status" value="1"/>
</dbReference>
<dbReference type="PROSITE" id="PS00893">
    <property type="entry name" value="NUDIX_BOX"/>
    <property type="match status" value="1"/>
</dbReference>